<proteinExistence type="inferred from homology"/>
<organism>
    <name type="scientific">Leifsonia xyli subsp. xyli (strain CTCB07)</name>
    <dbReference type="NCBI Taxonomy" id="281090"/>
    <lineage>
        <taxon>Bacteria</taxon>
        <taxon>Bacillati</taxon>
        <taxon>Actinomycetota</taxon>
        <taxon>Actinomycetes</taxon>
        <taxon>Micrococcales</taxon>
        <taxon>Microbacteriaceae</taxon>
        <taxon>Leifsonia</taxon>
    </lineage>
</organism>
<reference key="1">
    <citation type="journal article" date="2004" name="Mol. Plant Microbe Interact.">
        <title>The genome sequence of the Gram-positive sugarcane pathogen Leifsonia xyli subsp. xyli.</title>
        <authorList>
            <person name="Monteiro-Vitorello C.B."/>
            <person name="Camargo L.E.A."/>
            <person name="Van Sluys M.A."/>
            <person name="Kitajima J.P."/>
            <person name="Truffi D."/>
            <person name="do Amaral A.M."/>
            <person name="Harakava R."/>
            <person name="de Oliveira J.C.F."/>
            <person name="Wood D."/>
            <person name="de Oliveira M.C."/>
            <person name="Miyaki C.Y."/>
            <person name="Takita M.A."/>
            <person name="da Silva A.C.R."/>
            <person name="Furlan L.R."/>
            <person name="Carraro D.M."/>
            <person name="Camarotte G."/>
            <person name="Almeida N.F. Jr."/>
            <person name="Carrer H."/>
            <person name="Coutinho L.L."/>
            <person name="El-Dorry H.A."/>
            <person name="Ferro M.I.T."/>
            <person name="Gagliardi P.R."/>
            <person name="Giglioti E."/>
            <person name="Goldman M.H.S."/>
            <person name="Goldman G.H."/>
            <person name="Kimura E.T."/>
            <person name="Ferro E.S."/>
            <person name="Kuramae E.E."/>
            <person name="Lemos E.G.M."/>
            <person name="Lemos M.V.F."/>
            <person name="Mauro S.M.Z."/>
            <person name="Machado M.A."/>
            <person name="Marino C.L."/>
            <person name="Menck C.F."/>
            <person name="Nunes L.R."/>
            <person name="Oliveira R.C."/>
            <person name="Pereira G.G."/>
            <person name="Siqueira W."/>
            <person name="de Souza A.A."/>
            <person name="Tsai S.M."/>
            <person name="Zanca A.S."/>
            <person name="Simpson A.J.G."/>
            <person name="Brumbley S.M."/>
            <person name="Setubal J.C."/>
        </authorList>
    </citation>
    <scope>NUCLEOTIDE SEQUENCE [LARGE SCALE GENOMIC DNA]</scope>
    <source>
        <strain>CTCB07</strain>
    </source>
</reference>
<name>RL3_LEIXX</name>
<feature type="chain" id="PRO_0000241361" description="Large ribosomal subunit protein uL3">
    <location>
        <begin position="1"/>
        <end position="219"/>
    </location>
</feature>
<feature type="region of interest" description="Disordered" evidence="2">
    <location>
        <begin position="140"/>
        <end position="163"/>
    </location>
</feature>
<accession>Q6ACZ5</accession>
<protein>
    <recommendedName>
        <fullName evidence="1">Large ribosomal subunit protein uL3</fullName>
    </recommendedName>
    <alternativeName>
        <fullName evidence="3">50S ribosomal protein L3</fullName>
    </alternativeName>
</protein>
<keyword id="KW-1185">Reference proteome</keyword>
<keyword id="KW-0687">Ribonucleoprotein</keyword>
<keyword id="KW-0689">Ribosomal protein</keyword>
<keyword id="KW-0694">RNA-binding</keyword>
<keyword id="KW-0699">rRNA-binding</keyword>
<evidence type="ECO:0000255" key="1">
    <source>
        <dbReference type="HAMAP-Rule" id="MF_01325"/>
    </source>
</evidence>
<evidence type="ECO:0000256" key="2">
    <source>
        <dbReference type="SAM" id="MobiDB-lite"/>
    </source>
</evidence>
<evidence type="ECO:0000305" key="3"/>
<gene>
    <name evidence="1" type="primary">rplC</name>
    <name type="ordered locus">Lxx20330</name>
</gene>
<sequence length="219" mass="23387">MSTIDTKTSRGLLGKKLGMTQVWDENDTLIPVTVIEITPNVVTQVRTPEADGYNAVQIAYGQIDRRKVNKPSAGHFDKAGVTPRRHLTEVRTADAAEYSAGQELTVDGTFEAGQLVDVVGTSKSKGFAGVMKRHNFQGVSASHGAHRNHRKPGSIGASSTPSRVFKGMRMAGRMGGERVTVLNLKVQAIDAEKGLLLVKGAVPGARGRIVFVRNAVKGA</sequence>
<dbReference type="EMBL" id="AE016822">
    <property type="protein sequence ID" value="AAT89749.1"/>
    <property type="molecule type" value="Genomic_DNA"/>
</dbReference>
<dbReference type="RefSeq" id="WP_011186735.1">
    <property type="nucleotide sequence ID" value="NC_006087.1"/>
</dbReference>
<dbReference type="SMR" id="Q6ACZ5"/>
<dbReference type="STRING" id="281090.Lxx20330"/>
<dbReference type="KEGG" id="lxx:Lxx20330"/>
<dbReference type="eggNOG" id="COG0087">
    <property type="taxonomic scope" value="Bacteria"/>
</dbReference>
<dbReference type="HOGENOM" id="CLU_044142_4_1_11"/>
<dbReference type="Proteomes" id="UP000001306">
    <property type="component" value="Chromosome"/>
</dbReference>
<dbReference type="GO" id="GO:0022625">
    <property type="term" value="C:cytosolic large ribosomal subunit"/>
    <property type="evidence" value="ECO:0007669"/>
    <property type="project" value="TreeGrafter"/>
</dbReference>
<dbReference type="GO" id="GO:0019843">
    <property type="term" value="F:rRNA binding"/>
    <property type="evidence" value="ECO:0007669"/>
    <property type="project" value="UniProtKB-UniRule"/>
</dbReference>
<dbReference type="GO" id="GO:0003735">
    <property type="term" value="F:structural constituent of ribosome"/>
    <property type="evidence" value="ECO:0007669"/>
    <property type="project" value="InterPro"/>
</dbReference>
<dbReference type="GO" id="GO:0006412">
    <property type="term" value="P:translation"/>
    <property type="evidence" value="ECO:0007669"/>
    <property type="project" value="UniProtKB-UniRule"/>
</dbReference>
<dbReference type="FunFam" id="2.40.30.10:FF:000004">
    <property type="entry name" value="50S ribosomal protein L3"/>
    <property type="match status" value="1"/>
</dbReference>
<dbReference type="FunFam" id="3.30.160.810:FF:000001">
    <property type="entry name" value="50S ribosomal protein L3"/>
    <property type="match status" value="1"/>
</dbReference>
<dbReference type="Gene3D" id="3.30.160.810">
    <property type="match status" value="1"/>
</dbReference>
<dbReference type="Gene3D" id="2.40.30.10">
    <property type="entry name" value="Translation factors"/>
    <property type="match status" value="1"/>
</dbReference>
<dbReference type="HAMAP" id="MF_01325_B">
    <property type="entry name" value="Ribosomal_uL3_B"/>
    <property type="match status" value="1"/>
</dbReference>
<dbReference type="InterPro" id="IPR000597">
    <property type="entry name" value="Ribosomal_uL3"/>
</dbReference>
<dbReference type="InterPro" id="IPR019927">
    <property type="entry name" value="Ribosomal_uL3_bac/org-type"/>
</dbReference>
<dbReference type="InterPro" id="IPR009000">
    <property type="entry name" value="Transl_B-barrel_sf"/>
</dbReference>
<dbReference type="NCBIfam" id="TIGR03625">
    <property type="entry name" value="L3_bact"/>
    <property type="match status" value="1"/>
</dbReference>
<dbReference type="PANTHER" id="PTHR11229">
    <property type="entry name" value="50S RIBOSOMAL PROTEIN L3"/>
    <property type="match status" value="1"/>
</dbReference>
<dbReference type="PANTHER" id="PTHR11229:SF16">
    <property type="entry name" value="LARGE RIBOSOMAL SUBUNIT PROTEIN UL3C"/>
    <property type="match status" value="1"/>
</dbReference>
<dbReference type="Pfam" id="PF00297">
    <property type="entry name" value="Ribosomal_L3"/>
    <property type="match status" value="1"/>
</dbReference>
<dbReference type="SUPFAM" id="SSF50447">
    <property type="entry name" value="Translation proteins"/>
    <property type="match status" value="1"/>
</dbReference>
<comment type="function">
    <text evidence="1">One of the primary rRNA binding proteins, it binds directly near the 3'-end of the 23S rRNA, where it nucleates assembly of the 50S subunit.</text>
</comment>
<comment type="subunit">
    <text evidence="1">Part of the 50S ribosomal subunit. Forms a cluster with proteins L14 and L19.</text>
</comment>
<comment type="similarity">
    <text evidence="1">Belongs to the universal ribosomal protein uL3 family.</text>
</comment>